<gene>
    <name evidence="1" type="primary">tgt</name>
    <name type="ordered locus">TC_0465</name>
</gene>
<protein>
    <recommendedName>
        <fullName evidence="1">Queuine tRNA-ribosyltransferase</fullName>
        <ecNumber evidence="1">2.4.2.29</ecNumber>
    </recommendedName>
    <alternativeName>
        <fullName evidence="1">Guanine insertion enzyme</fullName>
    </alternativeName>
    <alternativeName>
        <fullName evidence="1">tRNA-guanine transglycosylase</fullName>
    </alternativeName>
</protein>
<organism>
    <name type="scientific">Chlamydia muridarum (strain MoPn / Nigg)</name>
    <dbReference type="NCBI Taxonomy" id="243161"/>
    <lineage>
        <taxon>Bacteria</taxon>
        <taxon>Pseudomonadati</taxon>
        <taxon>Chlamydiota</taxon>
        <taxon>Chlamydiia</taxon>
        <taxon>Chlamydiales</taxon>
        <taxon>Chlamydiaceae</taxon>
        <taxon>Chlamydia/Chlamydophila group</taxon>
        <taxon>Chlamydia</taxon>
    </lineage>
</organism>
<sequence>MALRFEILHQSKKSRARVGRIETEHGCIDTPAFVPVATNGALKGVLDHSNIPLMFCNTYHLIVHPGAEAVAAMGGLHQFIGRNAPIITDSGGFQIFSLAYGSVAEEIKSCGKKKGENSIIKINDEGVWFKSYRDGRKLFLSPEVSVQAQKHLGADIIIPLDELLPFHTDPAYFQQSSQRTYAWEKRSLDYHLANPGYQSMYGVIHGGTFPDQRKLGCQFVEDLPFDGSAIGGSLGKNLRDIVGVVDVTTANLSIERPRHLLGIGDLPSIWATVGFGIDSFDSSYPTKAARHGMILTSQGSLKINNQRYASDLNPIEPGCACPACSQGISRAYLRHLFKVHEPNAGIWASIHNMHYMQKIMSKIREKILNDQL</sequence>
<accession>Q9PKK0</accession>
<evidence type="ECO:0000255" key="1">
    <source>
        <dbReference type="HAMAP-Rule" id="MF_00168"/>
    </source>
</evidence>
<reference key="1">
    <citation type="journal article" date="2000" name="Nucleic Acids Res.">
        <title>Genome sequences of Chlamydia trachomatis MoPn and Chlamydia pneumoniae AR39.</title>
        <authorList>
            <person name="Read T.D."/>
            <person name="Brunham R.C."/>
            <person name="Shen C."/>
            <person name="Gill S.R."/>
            <person name="Heidelberg J.F."/>
            <person name="White O."/>
            <person name="Hickey E.K."/>
            <person name="Peterson J.D."/>
            <person name="Utterback T.R."/>
            <person name="Berry K.J."/>
            <person name="Bass S."/>
            <person name="Linher K.D."/>
            <person name="Weidman J.F."/>
            <person name="Khouri H.M."/>
            <person name="Craven B."/>
            <person name="Bowman C."/>
            <person name="Dodson R.J."/>
            <person name="Gwinn M.L."/>
            <person name="Nelson W.C."/>
            <person name="DeBoy R.T."/>
            <person name="Kolonay J.F."/>
            <person name="McClarty G."/>
            <person name="Salzberg S.L."/>
            <person name="Eisen J.A."/>
            <person name="Fraser C.M."/>
        </authorList>
    </citation>
    <scope>NUCLEOTIDE SEQUENCE [LARGE SCALE GENOMIC DNA]</scope>
    <source>
        <strain>MoPn / Nigg</strain>
    </source>
</reference>
<keyword id="KW-0328">Glycosyltransferase</keyword>
<keyword id="KW-0479">Metal-binding</keyword>
<keyword id="KW-0671">Queuosine biosynthesis</keyword>
<keyword id="KW-0808">Transferase</keyword>
<keyword id="KW-0819">tRNA processing</keyword>
<keyword id="KW-0862">Zinc</keyword>
<name>TGT_CHLMU</name>
<comment type="function">
    <text evidence="1">Catalyzes the base-exchange of a guanine (G) residue with the queuine precursor 7-aminomethyl-7-deazaguanine (PreQ1) at position 34 (anticodon wobble position) in tRNAs with GU(N) anticodons (tRNA-Asp, -Asn, -His and -Tyr). Catalysis occurs through a double-displacement mechanism. The nucleophile active site attacks the C1' of nucleotide 34 to detach the guanine base from the RNA, forming a covalent enzyme-RNA intermediate. The proton acceptor active site deprotonates the incoming PreQ1, allowing a nucleophilic attack on the C1' of the ribose to form the product. After dissociation, two additional enzymatic reactions on the tRNA convert PreQ1 to queuine (Q), resulting in the hypermodified nucleoside queuosine (7-(((4,5-cis-dihydroxy-2-cyclopenten-1-yl)amino)methyl)-7-deazaguanosine).</text>
</comment>
<comment type="catalytic activity">
    <reaction evidence="1">
        <text>7-aminomethyl-7-carbaguanine + guanosine(34) in tRNA = 7-aminomethyl-7-carbaguanosine(34) in tRNA + guanine</text>
        <dbReference type="Rhea" id="RHEA:24104"/>
        <dbReference type="Rhea" id="RHEA-COMP:10341"/>
        <dbReference type="Rhea" id="RHEA-COMP:10342"/>
        <dbReference type="ChEBI" id="CHEBI:16235"/>
        <dbReference type="ChEBI" id="CHEBI:58703"/>
        <dbReference type="ChEBI" id="CHEBI:74269"/>
        <dbReference type="ChEBI" id="CHEBI:82833"/>
        <dbReference type="EC" id="2.4.2.29"/>
    </reaction>
</comment>
<comment type="cofactor">
    <cofactor evidence="1">
        <name>Zn(2+)</name>
        <dbReference type="ChEBI" id="CHEBI:29105"/>
    </cofactor>
    <text evidence="1">Binds 1 zinc ion per subunit.</text>
</comment>
<comment type="pathway">
    <text evidence="1">tRNA modification; tRNA-queuosine biosynthesis.</text>
</comment>
<comment type="subunit">
    <text evidence="1">Homodimer. Within each dimer, one monomer is responsible for RNA recognition and catalysis, while the other monomer binds to the replacement base PreQ1.</text>
</comment>
<comment type="similarity">
    <text evidence="1">Belongs to the queuine tRNA-ribosyltransferase family.</text>
</comment>
<dbReference type="EC" id="2.4.2.29" evidence="1"/>
<dbReference type="EMBL" id="AE002160">
    <property type="protein sequence ID" value="AAF39315.1"/>
    <property type="molecule type" value="Genomic_DNA"/>
</dbReference>
<dbReference type="PIR" id="A81699">
    <property type="entry name" value="A81699"/>
</dbReference>
<dbReference type="RefSeq" id="WP_010230512.1">
    <property type="nucleotide sequence ID" value="NZ_CP063055.1"/>
</dbReference>
<dbReference type="SMR" id="Q9PKK0"/>
<dbReference type="GeneID" id="1245820"/>
<dbReference type="KEGG" id="cmu:TC_0465"/>
<dbReference type="eggNOG" id="COG0343">
    <property type="taxonomic scope" value="Bacteria"/>
</dbReference>
<dbReference type="HOGENOM" id="CLU_022060_0_2_0"/>
<dbReference type="OrthoDB" id="9805417at2"/>
<dbReference type="UniPathway" id="UPA00392"/>
<dbReference type="Proteomes" id="UP000000800">
    <property type="component" value="Chromosome"/>
</dbReference>
<dbReference type="GO" id="GO:0046872">
    <property type="term" value="F:metal ion binding"/>
    <property type="evidence" value="ECO:0007669"/>
    <property type="project" value="UniProtKB-KW"/>
</dbReference>
<dbReference type="GO" id="GO:0008479">
    <property type="term" value="F:tRNA-guanosine(34) queuine transglycosylase activity"/>
    <property type="evidence" value="ECO:0007669"/>
    <property type="project" value="UniProtKB-UniRule"/>
</dbReference>
<dbReference type="GO" id="GO:0008616">
    <property type="term" value="P:queuosine biosynthetic process"/>
    <property type="evidence" value="ECO:0007669"/>
    <property type="project" value="UniProtKB-UniRule"/>
</dbReference>
<dbReference type="GO" id="GO:0101030">
    <property type="term" value="P:tRNA-guanine transglycosylation"/>
    <property type="evidence" value="ECO:0007669"/>
    <property type="project" value="InterPro"/>
</dbReference>
<dbReference type="Gene3D" id="3.20.20.105">
    <property type="entry name" value="Queuine tRNA-ribosyltransferase-like"/>
    <property type="match status" value="1"/>
</dbReference>
<dbReference type="HAMAP" id="MF_00168">
    <property type="entry name" value="Q_tRNA_Tgt"/>
    <property type="match status" value="1"/>
</dbReference>
<dbReference type="InterPro" id="IPR004803">
    <property type="entry name" value="TGT"/>
</dbReference>
<dbReference type="InterPro" id="IPR036511">
    <property type="entry name" value="TGT-like_sf"/>
</dbReference>
<dbReference type="InterPro" id="IPR002616">
    <property type="entry name" value="tRNA_ribo_trans-like"/>
</dbReference>
<dbReference type="NCBIfam" id="TIGR00430">
    <property type="entry name" value="Q_tRNA_tgt"/>
    <property type="match status" value="1"/>
</dbReference>
<dbReference type="NCBIfam" id="TIGR00449">
    <property type="entry name" value="tgt_general"/>
    <property type="match status" value="1"/>
</dbReference>
<dbReference type="PANTHER" id="PTHR43468">
    <property type="match status" value="1"/>
</dbReference>
<dbReference type="PANTHER" id="PTHR43468:SF1">
    <property type="entry name" value="TRNA-GUANOSINE(34) QUEUINE TRANSGLYCOSYLASE"/>
    <property type="match status" value="1"/>
</dbReference>
<dbReference type="Pfam" id="PF01702">
    <property type="entry name" value="TGT"/>
    <property type="match status" value="1"/>
</dbReference>
<dbReference type="SUPFAM" id="SSF51713">
    <property type="entry name" value="tRNA-guanine transglycosylase"/>
    <property type="match status" value="1"/>
</dbReference>
<proteinExistence type="inferred from homology"/>
<feature type="chain" id="PRO_0000135464" description="Queuine tRNA-ribosyltransferase">
    <location>
        <begin position="1"/>
        <end position="372"/>
    </location>
</feature>
<feature type="region of interest" description="RNA binding" evidence="1">
    <location>
        <begin position="262"/>
        <end position="268"/>
    </location>
</feature>
<feature type="region of interest" description="RNA binding; important for wobble base 34 recognition" evidence="1">
    <location>
        <begin position="286"/>
        <end position="290"/>
    </location>
</feature>
<feature type="active site" description="Proton acceptor" evidence="1">
    <location>
        <position position="89"/>
    </location>
</feature>
<feature type="active site" description="Nucleophile" evidence="1">
    <location>
        <position position="281"/>
    </location>
</feature>
<feature type="binding site" evidence="1">
    <location>
        <begin position="89"/>
        <end position="93"/>
    </location>
    <ligand>
        <name>substrate</name>
    </ligand>
</feature>
<feature type="binding site" evidence="1">
    <location>
        <position position="161"/>
    </location>
    <ligand>
        <name>substrate</name>
    </ligand>
</feature>
<feature type="binding site" evidence="1">
    <location>
        <position position="232"/>
    </location>
    <ligand>
        <name>substrate</name>
    </ligand>
</feature>
<feature type="binding site" evidence="1">
    <location>
        <position position="319"/>
    </location>
    <ligand>
        <name>Zn(2+)</name>
        <dbReference type="ChEBI" id="CHEBI:29105"/>
    </ligand>
</feature>
<feature type="binding site" evidence="1">
    <location>
        <position position="321"/>
    </location>
    <ligand>
        <name>Zn(2+)</name>
        <dbReference type="ChEBI" id="CHEBI:29105"/>
    </ligand>
</feature>
<feature type="binding site" evidence="1">
    <location>
        <position position="324"/>
    </location>
    <ligand>
        <name>Zn(2+)</name>
        <dbReference type="ChEBI" id="CHEBI:29105"/>
    </ligand>
</feature>
<feature type="binding site" evidence="1">
    <location>
        <position position="351"/>
    </location>
    <ligand>
        <name>Zn(2+)</name>
        <dbReference type="ChEBI" id="CHEBI:29105"/>
    </ligand>
</feature>